<protein>
    <recommendedName>
        <fullName evidence="1">Bifunctional protein PyrR</fullName>
    </recommendedName>
    <domain>
        <recommendedName>
            <fullName evidence="1">Pyrimidine operon regulatory protein</fullName>
        </recommendedName>
    </domain>
    <domain>
        <recommendedName>
            <fullName evidence="1">Uracil phosphoribosyltransferase</fullName>
            <shortName evidence="1">UPRTase</shortName>
            <ecNumber evidence="1">2.4.2.9</ecNumber>
        </recommendedName>
    </domain>
</protein>
<gene>
    <name evidence="1" type="primary">pyrR</name>
    <name type="ordered locus">Teth514_1819</name>
</gene>
<comment type="function">
    <text evidence="1">Regulates transcriptional attenuation of the pyrimidine nucleotide (pyr) operon by binding in a uridine-dependent manner to specific sites on pyr mRNA. This disrupts an antiterminator hairpin in the RNA and favors formation of a downstream transcription terminator, leading to a reduced expression of downstream genes.</text>
</comment>
<comment type="function">
    <text evidence="1">Also displays a weak uracil phosphoribosyltransferase activity which is not physiologically significant.</text>
</comment>
<comment type="catalytic activity">
    <reaction evidence="1">
        <text>UMP + diphosphate = 5-phospho-alpha-D-ribose 1-diphosphate + uracil</text>
        <dbReference type="Rhea" id="RHEA:13017"/>
        <dbReference type="ChEBI" id="CHEBI:17568"/>
        <dbReference type="ChEBI" id="CHEBI:33019"/>
        <dbReference type="ChEBI" id="CHEBI:57865"/>
        <dbReference type="ChEBI" id="CHEBI:58017"/>
        <dbReference type="EC" id="2.4.2.9"/>
    </reaction>
</comment>
<comment type="subunit">
    <text evidence="1">Homodimer and homohexamer; in equilibrium.</text>
</comment>
<comment type="similarity">
    <text evidence="1">Belongs to the purine/pyrimidine phosphoribosyltransferase family. PyrR subfamily.</text>
</comment>
<evidence type="ECO:0000255" key="1">
    <source>
        <dbReference type="HAMAP-Rule" id="MF_01219"/>
    </source>
</evidence>
<organism>
    <name type="scientific">Thermoanaerobacter sp. (strain X514)</name>
    <dbReference type="NCBI Taxonomy" id="399726"/>
    <lineage>
        <taxon>Bacteria</taxon>
        <taxon>Bacillati</taxon>
        <taxon>Bacillota</taxon>
        <taxon>Clostridia</taxon>
        <taxon>Thermoanaerobacterales</taxon>
        <taxon>Thermoanaerobacteraceae</taxon>
        <taxon>Thermoanaerobacter</taxon>
    </lineage>
</organism>
<keyword id="KW-0328">Glycosyltransferase</keyword>
<keyword id="KW-0694">RNA-binding</keyword>
<keyword id="KW-0804">Transcription</keyword>
<keyword id="KW-0805">Transcription regulation</keyword>
<keyword id="KW-0806">Transcription termination</keyword>
<keyword id="KW-0808">Transferase</keyword>
<dbReference type="EC" id="2.4.2.9" evidence="1"/>
<dbReference type="EMBL" id="CP000923">
    <property type="protein sequence ID" value="ABY93101.1"/>
    <property type="molecule type" value="Genomic_DNA"/>
</dbReference>
<dbReference type="RefSeq" id="WP_003868400.1">
    <property type="nucleotide sequence ID" value="NC_010320.1"/>
</dbReference>
<dbReference type="SMR" id="B0K2F0"/>
<dbReference type="KEGG" id="tex:Teth514_1819"/>
<dbReference type="HOGENOM" id="CLU_094234_2_1_9"/>
<dbReference type="Proteomes" id="UP000002155">
    <property type="component" value="Chromosome"/>
</dbReference>
<dbReference type="GO" id="GO:0003723">
    <property type="term" value="F:RNA binding"/>
    <property type="evidence" value="ECO:0007669"/>
    <property type="project" value="UniProtKB-UniRule"/>
</dbReference>
<dbReference type="GO" id="GO:0004845">
    <property type="term" value="F:uracil phosphoribosyltransferase activity"/>
    <property type="evidence" value="ECO:0007669"/>
    <property type="project" value="UniProtKB-UniRule"/>
</dbReference>
<dbReference type="GO" id="GO:0006353">
    <property type="term" value="P:DNA-templated transcription termination"/>
    <property type="evidence" value="ECO:0007669"/>
    <property type="project" value="UniProtKB-UniRule"/>
</dbReference>
<dbReference type="CDD" id="cd06223">
    <property type="entry name" value="PRTases_typeI"/>
    <property type="match status" value="1"/>
</dbReference>
<dbReference type="FunFam" id="3.40.50.2020:FF:000020">
    <property type="entry name" value="Bifunctional protein PyrR"/>
    <property type="match status" value="1"/>
</dbReference>
<dbReference type="Gene3D" id="3.40.50.2020">
    <property type="match status" value="1"/>
</dbReference>
<dbReference type="HAMAP" id="MF_01219">
    <property type="entry name" value="PyrR"/>
    <property type="match status" value="1"/>
</dbReference>
<dbReference type="InterPro" id="IPR000836">
    <property type="entry name" value="PRibTrfase_dom"/>
</dbReference>
<dbReference type="InterPro" id="IPR029057">
    <property type="entry name" value="PRTase-like"/>
</dbReference>
<dbReference type="InterPro" id="IPR023050">
    <property type="entry name" value="PyrR"/>
</dbReference>
<dbReference type="InterPro" id="IPR050137">
    <property type="entry name" value="PyrR_bifunctional"/>
</dbReference>
<dbReference type="NCBIfam" id="NF003548">
    <property type="entry name" value="PRK05205.1-4"/>
    <property type="match status" value="1"/>
</dbReference>
<dbReference type="NCBIfam" id="NF003549">
    <property type="entry name" value="PRK05205.1-5"/>
    <property type="match status" value="1"/>
</dbReference>
<dbReference type="PANTHER" id="PTHR11608">
    <property type="entry name" value="BIFUNCTIONAL PROTEIN PYRR"/>
    <property type="match status" value="1"/>
</dbReference>
<dbReference type="PANTHER" id="PTHR11608:SF0">
    <property type="entry name" value="BIFUNCTIONAL PROTEIN PYRR"/>
    <property type="match status" value="1"/>
</dbReference>
<dbReference type="Pfam" id="PF00156">
    <property type="entry name" value="Pribosyltran"/>
    <property type="match status" value="1"/>
</dbReference>
<dbReference type="SUPFAM" id="SSF53271">
    <property type="entry name" value="PRTase-like"/>
    <property type="match status" value="1"/>
</dbReference>
<feature type="chain" id="PRO_1000139215" description="Bifunctional protein PyrR">
    <location>
        <begin position="1"/>
        <end position="178"/>
    </location>
</feature>
<feature type="short sequence motif" description="PRPP-binding" evidence="1">
    <location>
        <begin position="99"/>
        <end position="111"/>
    </location>
</feature>
<sequence length="178" mass="19907">MKIKAEIMDEKAIDRALIRIAHEIVERNKGIEDVVLVGIKTRGVPLAERIAKYISRIEGKKPPVGSLDITLYRDDLTTDLEQPLVKKKDIGVDVVGKIVVLVDDVIYTGRTIRAAMDAIIDLGRPKAIQLAELIDRGHRELPIKPDYVGKNVPTSKNEIVNVMLEEVDKVNRVVITEK</sequence>
<reference key="1">
    <citation type="submission" date="2008-01" db="EMBL/GenBank/DDBJ databases">
        <title>Complete sequence of Thermoanaerobacter sp. X514.</title>
        <authorList>
            <consortium name="US DOE Joint Genome Institute"/>
            <person name="Copeland A."/>
            <person name="Lucas S."/>
            <person name="Lapidus A."/>
            <person name="Barry K."/>
            <person name="Glavina del Rio T."/>
            <person name="Dalin E."/>
            <person name="Tice H."/>
            <person name="Pitluck S."/>
            <person name="Bruce D."/>
            <person name="Goodwin L."/>
            <person name="Saunders E."/>
            <person name="Brettin T."/>
            <person name="Detter J.C."/>
            <person name="Han C."/>
            <person name="Schmutz J."/>
            <person name="Larimer F."/>
            <person name="Land M."/>
            <person name="Hauser L."/>
            <person name="Kyrpides N."/>
            <person name="Kim E."/>
            <person name="Hemme C."/>
            <person name="Fields M.W."/>
            <person name="He Z."/>
            <person name="Zhou J."/>
            <person name="Richardson P."/>
        </authorList>
    </citation>
    <scope>NUCLEOTIDE SEQUENCE [LARGE SCALE GENOMIC DNA]</scope>
    <source>
        <strain>X514</strain>
    </source>
</reference>
<proteinExistence type="inferred from homology"/>
<accession>B0K2F0</accession>
<name>PYRR_THEPX</name>